<gene>
    <name type="primary">gly-4</name>
    <name type="ORF">Y116F11B.12</name>
</gene>
<organism>
    <name type="scientific">Caenorhabditis elegans</name>
    <dbReference type="NCBI Taxonomy" id="6239"/>
    <lineage>
        <taxon>Eukaryota</taxon>
        <taxon>Metazoa</taxon>
        <taxon>Ecdysozoa</taxon>
        <taxon>Nematoda</taxon>
        <taxon>Chromadorea</taxon>
        <taxon>Rhabditida</taxon>
        <taxon>Rhabditina</taxon>
        <taxon>Rhabditomorpha</taxon>
        <taxon>Rhabditoidea</taxon>
        <taxon>Rhabditidae</taxon>
        <taxon>Peloderinae</taxon>
        <taxon>Caenorhabditis</taxon>
    </lineage>
</organism>
<protein>
    <recommendedName>
        <fullName>Polypeptide N-acetylgalactosaminyltransferase 4</fullName>
        <shortName>pp-GaNTase 4</shortName>
        <ecNumber>2.4.1.41</ecNumber>
    </recommendedName>
    <alternativeName>
        <fullName>Protein-UDP acetylgalactosaminyltransferase 4</fullName>
    </alternativeName>
    <alternativeName>
        <fullName>UDP-GalNAc:polypeptide N-acetylgalactosaminyltransferase 4</fullName>
    </alternativeName>
</protein>
<feature type="chain" id="PRO_0000059147" description="Polypeptide N-acetylgalactosaminyltransferase 4">
    <location>
        <begin position="1"/>
        <end position="589"/>
    </location>
</feature>
<feature type="topological domain" description="Cytoplasmic" evidence="2">
    <location>
        <begin position="1"/>
        <end position="11"/>
    </location>
</feature>
<feature type="transmembrane region" description="Helical; Signal-anchor for type II membrane protein" evidence="2">
    <location>
        <begin position="12"/>
        <end position="31"/>
    </location>
</feature>
<feature type="topological domain" description="Lumenal" evidence="2">
    <location>
        <begin position="32"/>
        <end position="589"/>
    </location>
</feature>
<feature type="domain" description="Ricin B-type lectin" evidence="3">
    <location>
        <begin position="458"/>
        <end position="589"/>
    </location>
</feature>
<feature type="region of interest" description="Disordered" evidence="4">
    <location>
        <begin position="33"/>
        <end position="73"/>
    </location>
</feature>
<feature type="region of interest" description="Catalytic subdomain A">
    <location>
        <begin position="150"/>
        <end position="255"/>
    </location>
</feature>
<feature type="region of interest" description="Catalytic subdomain B">
    <location>
        <begin position="315"/>
        <end position="377"/>
    </location>
</feature>
<feature type="binding site" evidence="1">
    <location>
        <position position="191"/>
    </location>
    <ligand>
        <name>substrate</name>
    </ligand>
</feature>
<feature type="binding site" evidence="1">
    <location>
        <position position="216"/>
    </location>
    <ligand>
        <name>substrate</name>
    </ligand>
</feature>
<feature type="binding site" evidence="1">
    <location>
        <position position="239"/>
    </location>
    <ligand>
        <name>Mn(2+)</name>
        <dbReference type="ChEBI" id="CHEBI:29035"/>
    </ligand>
</feature>
<feature type="binding site" evidence="1">
    <location>
        <position position="240"/>
    </location>
    <ligand>
        <name>substrate</name>
    </ligand>
</feature>
<feature type="binding site" evidence="1">
    <location>
        <position position="241"/>
    </location>
    <ligand>
        <name>Mn(2+)</name>
        <dbReference type="ChEBI" id="CHEBI:29035"/>
    </ligand>
</feature>
<feature type="binding site" evidence="1">
    <location>
        <position position="346"/>
    </location>
    <ligand>
        <name>substrate</name>
    </ligand>
</feature>
<feature type="binding site" evidence="1">
    <location>
        <position position="374"/>
    </location>
    <ligand>
        <name>Mn(2+)</name>
        <dbReference type="ChEBI" id="CHEBI:29035"/>
    </ligand>
</feature>
<feature type="binding site" evidence="1">
    <location>
        <position position="377"/>
    </location>
    <ligand>
        <name>substrate</name>
    </ligand>
</feature>
<feature type="binding site" evidence="1">
    <location>
        <position position="380"/>
    </location>
    <ligand>
        <name>substrate</name>
    </ligand>
</feature>
<feature type="binding site" evidence="1">
    <location>
        <position position="382"/>
    </location>
    <ligand>
        <name>substrate</name>
    </ligand>
</feature>
<feature type="glycosylation site" description="N-linked (GlcNAc...) asparagine" evidence="2">
    <location>
        <position position="523"/>
    </location>
</feature>
<feature type="disulfide bond" evidence="3">
    <location>
        <begin position="140"/>
        <end position="369"/>
    </location>
</feature>
<feature type="disulfide bond" evidence="3">
    <location>
        <begin position="360"/>
        <end position="438"/>
    </location>
</feature>
<feature type="disulfide bond" evidence="3">
    <location>
        <begin position="471"/>
        <end position="488"/>
    </location>
</feature>
<feature type="disulfide bond" evidence="3">
    <location>
        <begin position="514"/>
        <end position="531"/>
    </location>
</feature>
<feature type="disulfide bond" evidence="3">
    <location>
        <begin position="553"/>
        <end position="571"/>
    </location>
</feature>
<feature type="splice variant" id="VSP_011236" description="In isoform b." evidence="6">
    <original>E</original>
    <variation>D</variation>
    <location>
        <position position="453"/>
    </location>
</feature>
<feature type="splice variant" id="VSP_011237" description="In isoform b." evidence="6">
    <location>
        <begin position="454"/>
        <end position="589"/>
    </location>
</feature>
<reference key="1">
    <citation type="journal article" date="1998" name="J. Biol. Chem.">
        <title>cDNA cloning and expression of a family of UDP-N-acetyl-D-galactosamine:polypeptide N-acetylgalactosaminyltransferase sequence homologs from Caenorhabditis elegans.</title>
        <authorList>
            <person name="Hagen F.K."/>
            <person name="Nehrke K."/>
        </authorList>
    </citation>
    <scope>NUCLEOTIDE SEQUENCE [MRNA] (ISOFORM A)</scope>
    <scope>ENZYME ACTIVITY</scope>
    <source>
        <strain>Bristol N2</strain>
    </source>
</reference>
<reference key="2">
    <citation type="journal article" date="1998" name="Science">
        <title>Genome sequence of the nematode C. elegans: a platform for investigating biology.</title>
        <authorList>
            <consortium name="The C. elegans sequencing consortium"/>
        </authorList>
    </citation>
    <scope>NUCLEOTIDE SEQUENCE [LARGE SCALE GENOMIC DNA]</scope>
    <scope>ALTERNATIVE SPLICING</scope>
    <source>
        <strain>Bristol N2</strain>
    </source>
</reference>
<keyword id="KW-0025">Alternative splicing</keyword>
<keyword id="KW-1015">Disulfide bond</keyword>
<keyword id="KW-0325">Glycoprotein</keyword>
<keyword id="KW-0328">Glycosyltransferase</keyword>
<keyword id="KW-0333">Golgi apparatus</keyword>
<keyword id="KW-0430">Lectin</keyword>
<keyword id="KW-0464">Manganese</keyword>
<keyword id="KW-0472">Membrane</keyword>
<keyword id="KW-0479">Metal-binding</keyword>
<keyword id="KW-1185">Reference proteome</keyword>
<keyword id="KW-0735">Signal-anchor</keyword>
<keyword id="KW-0808">Transferase</keyword>
<keyword id="KW-0812">Transmembrane</keyword>
<keyword id="KW-1133">Transmembrane helix</keyword>
<accession>Q8I136</accession>
<accession>O61390</accession>
<name>GALT4_CAEEL</name>
<proteinExistence type="evidence at transcript level"/>
<dbReference type="EC" id="2.4.1.41"/>
<dbReference type="EMBL" id="AF031834">
    <property type="protein sequence ID" value="AAC13670.1"/>
    <property type="molecule type" value="mRNA"/>
</dbReference>
<dbReference type="EMBL" id="AL132943">
    <property type="protein sequence ID" value="CAB81985.3"/>
    <property type="molecule type" value="Genomic_DNA"/>
</dbReference>
<dbReference type="EMBL" id="AL132943">
    <property type="protein sequence ID" value="CAC14394.1"/>
    <property type="molecule type" value="Genomic_DNA"/>
</dbReference>
<dbReference type="PIR" id="T42244">
    <property type="entry name" value="T42244"/>
</dbReference>
<dbReference type="RefSeq" id="NP_001024216.1">
    <molecule id="Q8I136-1"/>
    <property type="nucleotide sequence ID" value="NM_001029045.6"/>
</dbReference>
<dbReference type="RefSeq" id="NP_001379271.1">
    <molecule id="Q8I136-2"/>
    <property type="nucleotide sequence ID" value="NM_001392704.1"/>
</dbReference>
<dbReference type="RefSeq" id="NP_507850.2">
    <property type="nucleotide sequence ID" value="NM_075449.7"/>
</dbReference>
<dbReference type="SMR" id="Q8I136"/>
<dbReference type="BioGRID" id="45263">
    <property type="interactions" value="3"/>
</dbReference>
<dbReference type="DIP" id="DIP-26941N"/>
<dbReference type="FunCoup" id="Q8I136">
    <property type="interactions" value="1322"/>
</dbReference>
<dbReference type="IntAct" id="Q8I136">
    <property type="interactions" value="1"/>
</dbReference>
<dbReference type="STRING" id="6239.Y116F11B.12a.1"/>
<dbReference type="CAZy" id="CBM13">
    <property type="family name" value="Carbohydrate-Binding Module Family 13"/>
</dbReference>
<dbReference type="CAZy" id="GT27">
    <property type="family name" value="Glycosyltransferase Family 27"/>
</dbReference>
<dbReference type="GlyCosmos" id="Q8I136">
    <property type="glycosylation" value="1 site, No reported glycans"/>
</dbReference>
<dbReference type="PaxDb" id="6239-Y116F11B.12a.1"/>
<dbReference type="PeptideAtlas" id="Q8I136"/>
<dbReference type="EnsemblMetazoa" id="Y116F11B.12a.1">
    <molecule id="Q8I136-1"/>
    <property type="protein sequence ID" value="Y116F11B.12a.1"/>
    <property type="gene ID" value="WBGene00001629"/>
</dbReference>
<dbReference type="EnsemblMetazoa" id="Y116F11B.12a.2">
    <molecule id="Q8I136-1"/>
    <property type="protein sequence ID" value="Y116F11B.12a.2"/>
    <property type="gene ID" value="WBGene00001629"/>
</dbReference>
<dbReference type="EnsemblMetazoa" id="Y116F11B.12b.1">
    <molecule id="Q8I136-2"/>
    <property type="protein sequence ID" value="Y116F11B.12b.1"/>
    <property type="gene ID" value="WBGene00001629"/>
</dbReference>
<dbReference type="GeneID" id="180302"/>
<dbReference type="KEGG" id="cel:CELE_Y116F11B.12"/>
<dbReference type="UCSC" id="Y116F11B.12b.1">
    <molecule id="Q8I136-1"/>
    <property type="organism name" value="c. elegans"/>
</dbReference>
<dbReference type="AGR" id="WB:WBGene00001629"/>
<dbReference type="CTD" id="180302"/>
<dbReference type="WormBase" id="Y116F11B.12a">
    <molecule id="Q8I136-1"/>
    <property type="protein sequence ID" value="CE26046"/>
    <property type="gene ID" value="WBGene00001629"/>
    <property type="gene designation" value="gly-4"/>
</dbReference>
<dbReference type="WormBase" id="Y116F11B.12b">
    <molecule id="Q8I136-2"/>
    <property type="protein sequence ID" value="CE32074"/>
    <property type="gene ID" value="WBGene00001629"/>
    <property type="gene designation" value="gly-4"/>
</dbReference>
<dbReference type="eggNOG" id="KOG3738">
    <property type="taxonomic scope" value="Eukaryota"/>
</dbReference>
<dbReference type="GeneTree" id="ENSGT00940000156958"/>
<dbReference type="HOGENOM" id="CLU_013477_0_1_1"/>
<dbReference type="InParanoid" id="Q8I136"/>
<dbReference type="OMA" id="NVPMGSI"/>
<dbReference type="OrthoDB" id="429263at2759"/>
<dbReference type="PhylomeDB" id="Q8I136"/>
<dbReference type="Reactome" id="R-CEL-6811436">
    <property type="pathway name" value="COPI-independent Golgi-to-ER retrograde traffic"/>
</dbReference>
<dbReference type="Reactome" id="R-CEL-913709">
    <property type="pathway name" value="O-linked glycosylation of mucins"/>
</dbReference>
<dbReference type="UniPathway" id="UPA00378"/>
<dbReference type="PRO" id="PR:Q8I136"/>
<dbReference type="Proteomes" id="UP000001940">
    <property type="component" value="Chromosome V"/>
</dbReference>
<dbReference type="Bgee" id="WBGene00001629">
    <property type="expression patterns" value="Expressed in pharyngeal muscle cell (C elegans) and 4 other cell types or tissues"/>
</dbReference>
<dbReference type="ExpressionAtlas" id="Q8I136">
    <property type="expression patterns" value="baseline and differential"/>
</dbReference>
<dbReference type="GO" id="GO:0005794">
    <property type="term" value="C:Golgi apparatus"/>
    <property type="evidence" value="ECO:0000318"/>
    <property type="project" value="GO_Central"/>
</dbReference>
<dbReference type="GO" id="GO:0000139">
    <property type="term" value="C:Golgi membrane"/>
    <property type="evidence" value="ECO:0007669"/>
    <property type="project" value="UniProtKB-SubCell"/>
</dbReference>
<dbReference type="GO" id="GO:0030246">
    <property type="term" value="F:carbohydrate binding"/>
    <property type="evidence" value="ECO:0007669"/>
    <property type="project" value="UniProtKB-KW"/>
</dbReference>
<dbReference type="GO" id="GO:0046872">
    <property type="term" value="F:metal ion binding"/>
    <property type="evidence" value="ECO:0007669"/>
    <property type="project" value="UniProtKB-KW"/>
</dbReference>
<dbReference type="GO" id="GO:0004653">
    <property type="term" value="F:polypeptide N-acetylgalactosaminyltransferase activity"/>
    <property type="evidence" value="ECO:0000314"/>
    <property type="project" value="WormBase"/>
</dbReference>
<dbReference type="GO" id="GO:0006493">
    <property type="term" value="P:protein O-linked glycosylation"/>
    <property type="evidence" value="ECO:0000318"/>
    <property type="project" value="GO_Central"/>
</dbReference>
<dbReference type="GO" id="GO:0018243">
    <property type="term" value="P:protein O-linked glycosylation via threonine"/>
    <property type="evidence" value="ECO:0000314"/>
    <property type="project" value="WormBase"/>
</dbReference>
<dbReference type="CDD" id="cd23434">
    <property type="entry name" value="beta-trefoil_Ricin_GALNT2"/>
    <property type="match status" value="1"/>
</dbReference>
<dbReference type="CDD" id="cd02510">
    <property type="entry name" value="pp-GalNAc-T"/>
    <property type="match status" value="1"/>
</dbReference>
<dbReference type="FunFam" id="2.80.10.50:FF:000121">
    <property type="entry name" value="Polypeptide N-acetylgalactosaminyltransferase"/>
    <property type="match status" value="1"/>
</dbReference>
<dbReference type="FunFam" id="3.90.550.10:FF:000021">
    <property type="entry name" value="Polypeptide N-acetylgalactosaminyltransferase"/>
    <property type="match status" value="1"/>
</dbReference>
<dbReference type="Gene3D" id="2.80.10.50">
    <property type="match status" value="1"/>
</dbReference>
<dbReference type="Gene3D" id="3.90.550.10">
    <property type="entry name" value="Spore Coat Polysaccharide Biosynthesis Protein SpsA, Chain A"/>
    <property type="match status" value="1"/>
</dbReference>
<dbReference type="InterPro" id="IPR045885">
    <property type="entry name" value="GalNAc-T"/>
</dbReference>
<dbReference type="InterPro" id="IPR001173">
    <property type="entry name" value="Glyco_trans_2-like"/>
</dbReference>
<dbReference type="InterPro" id="IPR029044">
    <property type="entry name" value="Nucleotide-diphossugar_trans"/>
</dbReference>
<dbReference type="InterPro" id="IPR035992">
    <property type="entry name" value="Ricin_B-like_lectins"/>
</dbReference>
<dbReference type="InterPro" id="IPR000772">
    <property type="entry name" value="Ricin_B_lectin"/>
</dbReference>
<dbReference type="PANTHER" id="PTHR11675">
    <property type="entry name" value="N-ACETYLGALACTOSAMINYLTRANSFERASE"/>
    <property type="match status" value="1"/>
</dbReference>
<dbReference type="PANTHER" id="PTHR11675:SF119">
    <property type="entry name" value="POLYPEPTIDE N-ACETYLGALACTOSAMINYLTRANSFERASE 2"/>
    <property type="match status" value="1"/>
</dbReference>
<dbReference type="Pfam" id="PF00535">
    <property type="entry name" value="Glycos_transf_2"/>
    <property type="match status" value="1"/>
</dbReference>
<dbReference type="Pfam" id="PF00652">
    <property type="entry name" value="Ricin_B_lectin"/>
    <property type="match status" value="1"/>
</dbReference>
<dbReference type="SMART" id="SM00458">
    <property type="entry name" value="RICIN"/>
    <property type="match status" value="1"/>
</dbReference>
<dbReference type="SUPFAM" id="SSF53448">
    <property type="entry name" value="Nucleotide-diphospho-sugar transferases"/>
    <property type="match status" value="1"/>
</dbReference>
<dbReference type="SUPFAM" id="SSF50370">
    <property type="entry name" value="Ricin B-like lectins"/>
    <property type="match status" value="1"/>
</dbReference>
<dbReference type="PROSITE" id="PS50231">
    <property type="entry name" value="RICIN_B_LECTIN"/>
    <property type="match status" value="2"/>
</dbReference>
<evidence type="ECO:0000250" key="1"/>
<evidence type="ECO:0000255" key="2"/>
<evidence type="ECO:0000255" key="3">
    <source>
        <dbReference type="PROSITE-ProRule" id="PRU00174"/>
    </source>
</evidence>
<evidence type="ECO:0000256" key="4">
    <source>
        <dbReference type="SAM" id="MobiDB-lite"/>
    </source>
</evidence>
<evidence type="ECO:0000269" key="5">
    <source>
    </source>
</evidence>
<evidence type="ECO:0000305" key="6"/>
<sequence>MLPRMLKMKTVGTVLAVIWLFGLAFIYVQSTSSSLRPPGRHPPPLPQLDPLIPQNPPQNDEIRPKKSAPPIPTINLAEDTTIHERTEKDVTWKTFDVEKFLNKGKWHQGEDKYKANSFNQEASDALNPTRKIPDSREPQCRDVDYSKVGMQPTTVIITYHNEARSSLLRTVFSVFNQSPEELLLEIVLVDDNSQDVEIGKELAQIQRITVLRNNQREGLIRSRVKGAQVARAPVLTFLDSHIECNQKWLEPLLARIAENPKAVVAPIIDVINVDNFNYVGASADLRGGFDWTLVFRWEFMNEQLRKERHAHPTAPIRSPTMAGGLFAISKEWFNELGTYDLDMEVWGGENLEMSFRVWQCGGSLEIMPCSRVGHVFRKKHPYTFPGGSGNVFQKNTRRAAEVWMDEYKAIYLKNVPSARFVNFGDITDRLAIRDRLQCKSFKWYLENVYPQLEIPRKTPGKSFQMKIGNLCLDSMARKESEAPGLFGCHGTGGNQEWVFDQLTKTFKNAISQLCLDFSSNTENKTVTMVKCENLRPDTMVVEKNGWLTQGGKCLTVNQGSGGDWLIYGAHCELNNGAQRWIFEKLDTYE</sequence>
<comment type="function">
    <text>Catalyzes the initial reaction in O-linked oligosaccharide biosynthesis, the transfer of an N-acetyl-D-galactosamine residue to a serine or threonine residue on the protein receptor.</text>
</comment>
<comment type="catalytic activity">
    <reaction evidence="5">
        <text>L-seryl-[protein] + UDP-N-acetyl-alpha-D-galactosamine = a 3-O-[N-acetyl-alpha-D-galactosaminyl]-L-seryl-[protein] + UDP + H(+)</text>
        <dbReference type="Rhea" id="RHEA:23956"/>
        <dbReference type="Rhea" id="RHEA-COMP:9863"/>
        <dbReference type="Rhea" id="RHEA-COMP:12788"/>
        <dbReference type="ChEBI" id="CHEBI:15378"/>
        <dbReference type="ChEBI" id="CHEBI:29999"/>
        <dbReference type="ChEBI" id="CHEBI:53604"/>
        <dbReference type="ChEBI" id="CHEBI:58223"/>
        <dbReference type="ChEBI" id="CHEBI:67138"/>
        <dbReference type="EC" id="2.4.1.41"/>
    </reaction>
</comment>
<comment type="catalytic activity">
    <reaction evidence="5">
        <text>L-threonyl-[protein] + UDP-N-acetyl-alpha-D-galactosamine = a 3-O-[N-acetyl-alpha-D-galactosaminyl]-L-threonyl-[protein] + UDP + H(+)</text>
        <dbReference type="Rhea" id="RHEA:52424"/>
        <dbReference type="Rhea" id="RHEA-COMP:11060"/>
        <dbReference type="Rhea" id="RHEA-COMP:11689"/>
        <dbReference type="ChEBI" id="CHEBI:15378"/>
        <dbReference type="ChEBI" id="CHEBI:30013"/>
        <dbReference type="ChEBI" id="CHEBI:58223"/>
        <dbReference type="ChEBI" id="CHEBI:67138"/>
        <dbReference type="ChEBI" id="CHEBI:87075"/>
        <dbReference type="EC" id="2.4.1.41"/>
    </reaction>
</comment>
<comment type="cofactor">
    <cofactor evidence="1">
        <name>Mn(2+)</name>
        <dbReference type="ChEBI" id="CHEBI:29035"/>
    </cofactor>
</comment>
<comment type="pathway">
    <text>Protein modification; protein glycosylation.</text>
</comment>
<comment type="subcellular location">
    <subcellularLocation>
        <location evidence="1">Golgi apparatus membrane</location>
        <topology evidence="1">Single-pass type II membrane protein</topology>
    </subcellularLocation>
</comment>
<comment type="alternative products">
    <event type="alternative splicing"/>
    <isoform>
        <id>Q8I136-1</id>
        <name>a</name>
        <sequence type="displayed"/>
    </isoform>
    <isoform>
        <id>Q8I136-2</id>
        <name>b</name>
        <sequence type="described" ref="VSP_011236 VSP_011237"/>
    </isoform>
</comment>
<comment type="domain">
    <text evidence="1">There are two conserved domains in the glycosyltransferase region: the N-terminal domain (domain A, also called GT1 motif), which is probably involved in manganese coordination and substrate binding and the C-terminal domain (domain B, also called Gal/GalNAc-T motif), which is probably involved in catalytic reaction and UDP-Gal binding.</text>
</comment>
<comment type="domain">
    <text evidence="1">The ricin B-type lectin domain binds to GalNAc and contributes to the glycopeptide specificity.</text>
</comment>
<comment type="similarity">
    <text evidence="6">Belongs to the glycosyltransferase 2 family. GalNAc-T subfamily.</text>
</comment>